<evidence type="ECO:0000255" key="1">
    <source>
        <dbReference type="HAMAP-Rule" id="MF_00432"/>
    </source>
</evidence>
<evidence type="ECO:0000305" key="2"/>
<reference key="1">
    <citation type="journal article" date="2006" name="Mol. Biol. Evol.">
        <title>The chloroplast genome sequence of Chara vulgaris sheds new light into the closest green algal relatives of land plants.</title>
        <authorList>
            <person name="Turmel M."/>
            <person name="Otis C."/>
            <person name="Lemieux C."/>
        </authorList>
    </citation>
    <scope>NUCLEOTIDE SEQUENCE [LARGE SCALE GENOMIC DNA]</scope>
</reference>
<proteinExistence type="inferred from homology"/>
<sequence>MVEPLLSGIVLGLIPITLAGLFVTAYLQYRRGDQLNL</sequence>
<gene>
    <name evidence="1" type="primary">petG</name>
</gene>
<organism>
    <name type="scientific">Chara vulgaris</name>
    <name type="common">Common stonewort</name>
    <dbReference type="NCBI Taxonomy" id="55564"/>
    <lineage>
        <taxon>Eukaryota</taxon>
        <taxon>Viridiplantae</taxon>
        <taxon>Streptophyta</taxon>
        <taxon>Charophyceae</taxon>
        <taxon>Charales</taxon>
        <taxon>Characeae</taxon>
        <taxon>Chara</taxon>
    </lineage>
</organism>
<feature type="chain" id="PRO_0000275482" description="Cytochrome b6-f complex subunit 5">
    <location>
        <begin position="1"/>
        <end position="37"/>
    </location>
</feature>
<feature type="transmembrane region" description="Helical" evidence="1">
    <location>
        <begin position="5"/>
        <end position="25"/>
    </location>
</feature>
<accession>Q1ACI5</accession>
<name>PETG_CHAVU</name>
<protein>
    <recommendedName>
        <fullName evidence="1">Cytochrome b6-f complex subunit 5</fullName>
    </recommendedName>
    <alternativeName>
        <fullName evidence="1">Cytochrome b6-f complex subunit PetG</fullName>
    </alternativeName>
    <alternativeName>
        <fullName evidence="1">Cytochrome b6-f complex subunit V</fullName>
    </alternativeName>
</protein>
<dbReference type="EMBL" id="DQ229107">
    <property type="protein sequence ID" value="ABA61917.1"/>
    <property type="status" value="ALT_INIT"/>
    <property type="molecule type" value="Genomic_DNA"/>
</dbReference>
<dbReference type="RefSeq" id="YP_635762.1">
    <property type="nucleotide sequence ID" value="NC_008097.1"/>
</dbReference>
<dbReference type="SMR" id="Q1ACI5"/>
<dbReference type="GeneID" id="4100287"/>
<dbReference type="GO" id="GO:0009535">
    <property type="term" value="C:chloroplast thylakoid membrane"/>
    <property type="evidence" value="ECO:0007669"/>
    <property type="project" value="UniProtKB-SubCell"/>
</dbReference>
<dbReference type="GO" id="GO:0009512">
    <property type="term" value="C:cytochrome b6f complex"/>
    <property type="evidence" value="ECO:0007669"/>
    <property type="project" value="InterPro"/>
</dbReference>
<dbReference type="GO" id="GO:0045158">
    <property type="term" value="F:electron transporter, transferring electrons within cytochrome b6/f complex of photosystem II activity"/>
    <property type="evidence" value="ECO:0007669"/>
    <property type="project" value="UniProtKB-UniRule"/>
</dbReference>
<dbReference type="GO" id="GO:0017004">
    <property type="term" value="P:cytochrome complex assembly"/>
    <property type="evidence" value="ECO:0007669"/>
    <property type="project" value="UniProtKB-UniRule"/>
</dbReference>
<dbReference type="GO" id="GO:0015979">
    <property type="term" value="P:photosynthesis"/>
    <property type="evidence" value="ECO:0007669"/>
    <property type="project" value="UniProtKB-KW"/>
</dbReference>
<dbReference type="HAMAP" id="MF_00432">
    <property type="entry name" value="Cytb6_f_PetG"/>
    <property type="match status" value="1"/>
</dbReference>
<dbReference type="InterPro" id="IPR003683">
    <property type="entry name" value="Cyt_6/f_cplx_su5"/>
</dbReference>
<dbReference type="InterPro" id="IPR036099">
    <property type="entry name" value="Cyt_6/f_cplx_su5_sf"/>
</dbReference>
<dbReference type="NCBIfam" id="NF001907">
    <property type="entry name" value="PRK00665.1"/>
    <property type="match status" value="1"/>
</dbReference>
<dbReference type="Pfam" id="PF02529">
    <property type="entry name" value="PetG"/>
    <property type="match status" value="1"/>
</dbReference>
<dbReference type="PIRSF" id="PIRSF000034">
    <property type="entry name" value="Cyt_b6-f_V"/>
    <property type="match status" value="1"/>
</dbReference>
<dbReference type="SUPFAM" id="SSF103446">
    <property type="entry name" value="PetG subunit of the cytochrome b6f complex"/>
    <property type="match status" value="1"/>
</dbReference>
<comment type="function">
    <text evidence="1">Component of the cytochrome b6-f complex, which mediates electron transfer between photosystem II (PSII) and photosystem I (PSI), cyclic electron flow around PSI, and state transitions. PetG is required for either the stability or assembly of the cytochrome b6-f complex.</text>
</comment>
<comment type="subunit">
    <text evidence="1">The 4 large subunits of the cytochrome b6-f complex are cytochrome b6, subunit IV (17 kDa polypeptide, PetD), cytochrome f and the Rieske protein, while the 4 small subunits are PetG, PetL, PetM and PetN. The complex functions as a dimer.</text>
</comment>
<comment type="subcellular location">
    <subcellularLocation>
        <location evidence="1">Plastid</location>
        <location evidence="1">Chloroplast thylakoid membrane</location>
        <topology evidence="1">Single-pass membrane protein</topology>
    </subcellularLocation>
</comment>
<comment type="similarity">
    <text evidence="1">Belongs to the PetG family.</text>
</comment>
<comment type="sequence caution" evidence="2">
    <conflict type="erroneous initiation">
        <sequence resource="EMBL-CDS" id="ABA61917"/>
    </conflict>
</comment>
<keyword id="KW-0150">Chloroplast</keyword>
<keyword id="KW-0249">Electron transport</keyword>
<keyword id="KW-0472">Membrane</keyword>
<keyword id="KW-0602">Photosynthesis</keyword>
<keyword id="KW-0934">Plastid</keyword>
<keyword id="KW-0793">Thylakoid</keyword>
<keyword id="KW-0812">Transmembrane</keyword>
<keyword id="KW-1133">Transmembrane helix</keyword>
<keyword id="KW-0813">Transport</keyword>
<geneLocation type="chloroplast"/>